<reference key="1">
    <citation type="journal article" date="2004" name="PLoS Biol.">
        <title>Phylogenomics of the reproductive parasite Wolbachia pipientis wMel: a streamlined genome overrun by mobile genetic elements.</title>
        <authorList>
            <person name="Wu M."/>
            <person name="Sun L.V."/>
            <person name="Vamathevan J.J."/>
            <person name="Riegler M."/>
            <person name="DeBoy R.T."/>
            <person name="Brownlie J.C."/>
            <person name="McGraw E.A."/>
            <person name="Martin W."/>
            <person name="Esser C."/>
            <person name="Ahmadinejad N."/>
            <person name="Wiegand C."/>
            <person name="Madupu R."/>
            <person name="Beanan M.J."/>
            <person name="Brinkac L.M."/>
            <person name="Daugherty S.C."/>
            <person name="Durkin A.S."/>
            <person name="Kolonay J.F."/>
            <person name="Nelson W.C."/>
            <person name="Mohamoud Y."/>
            <person name="Lee P."/>
            <person name="Berry K.J."/>
            <person name="Young M.B."/>
            <person name="Utterback T.R."/>
            <person name="Weidman J.F."/>
            <person name="Nierman W.C."/>
            <person name="Paulsen I.T."/>
            <person name="Nelson K.E."/>
            <person name="Tettelin H."/>
            <person name="O'Neill S.L."/>
            <person name="Eisen J.A."/>
        </authorList>
    </citation>
    <scope>NUCLEOTIDE SEQUENCE [LARGE SCALE GENOMIC DNA]</scope>
</reference>
<comment type="function">
    <text evidence="1">This protein is involved in the repair of mismatches in DNA. It is possible that it carries out the mismatch recognition step. This protein has a weak ATPase activity.</text>
</comment>
<comment type="similarity">
    <text evidence="1">Belongs to the DNA mismatch repair MutS family.</text>
</comment>
<comment type="sequence caution" evidence="2">
    <conflict type="erroneous initiation">
        <sequence resource="EMBL-CDS" id="AAS13936"/>
    </conflict>
</comment>
<keyword id="KW-0067">ATP-binding</keyword>
<keyword id="KW-0227">DNA damage</keyword>
<keyword id="KW-0234">DNA repair</keyword>
<keyword id="KW-0238">DNA-binding</keyword>
<keyword id="KW-0547">Nucleotide-binding</keyword>
<dbReference type="EMBL" id="AE017196">
    <property type="protein sequence ID" value="AAS13936.1"/>
    <property type="status" value="ALT_INIT"/>
    <property type="molecule type" value="Genomic_DNA"/>
</dbReference>
<dbReference type="SMR" id="P61673"/>
<dbReference type="EnsemblBacteria" id="AAS13936">
    <property type="protein sequence ID" value="AAS13936"/>
    <property type="gene ID" value="WD_0190"/>
</dbReference>
<dbReference type="KEGG" id="wol:WD_0190"/>
<dbReference type="eggNOG" id="COG0249">
    <property type="taxonomic scope" value="Bacteria"/>
</dbReference>
<dbReference type="Proteomes" id="UP000008215">
    <property type="component" value="Chromosome"/>
</dbReference>
<dbReference type="GO" id="GO:0005524">
    <property type="term" value="F:ATP binding"/>
    <property type="evidence" value="ECO:0007669"/>
    <property type="project" value="UniProtKB-UniRule"/>
</dbReference>
<dbReference type="GO" id="GO:0140664">
    <property type="term" value="F:ATP-dependent DNA damage sensor activity"/>
    <property type="evidence" value="ECO:0007669"/>
    <property type="project" value="InterPro"/>
</dbReference>
<dbReference type="GO" id="GO:0003684">
    <property type="term" value="F:damaged DNA binding"/>
    <property type="evidence" value="ECO:0007669"/>
    <property type="project" value="UniProtKB-UniRule"/>
</dbReference>
<dbReference type="GO" id="GO:0030983">
    <property type="term" value="F:mismatched DNA binding"/>
    <property type="evidence" value="ECO:0007669"/>
    <property type="project" value="InterPro"/>
</dbReference>
<dbReference type="GO" id="GO:0006298">
    <property type="term" value="P:mismatch repair"/>
    <property type="evidence" value="ECO:0007669"/>
    <property type="project" value="UniProtKB-UniRule"/>
</dbReference>
<dbReference type="FunFam" id="3.40.1170.10:FF:000001">
    <property type="entry name" value="DNA mismatch repair protein MutS"/>
    <property type="match status" value="1"/>
</dbReference>
<dbReference type="Gene3D" id="1.10.1420.10">
    <property type="match status" value="2"/>
</dbReference>
<dbReference type="Gene3D" id="3.40.1170.10">
    <property type="entry name" value="DNA repair protein MutS, domain I"/>
    <property type="match status" value="1"/>
</dbReference>
<dbReference type="Gene3D" id="3.30.420.110">
    <property type="entry name" value="MutS, connector domain"/>
    <property type="match status" value="1"/>
</dbReference>
<dbReference type="Gene3D" id="3.40.50.300">
    <property type="entry name" value="P-loop containing nucleotide triphosphate hydrolases"/>
    <property type="match status" value="1"/>
</dbReference>
<dbReference type="HAMAP" id="MF_00096">
    <property type="entry name" value="MutS"/>
    <property type="match status" value="1"/>
</dbReference>
<dbReference type="InterPro" id="IPR005748">
    <property type="entry name" value="DNA_mismatch_repair_MutS"/>
</dbReference>
<dbReference type="InterPro" id="IPR007695">
    <property type="entry name" value="DNA_mismatch_repair_MutS-lik_N"/>
</dbReference>
<dbReference type="InterPro" id="IPR017261">
    <property type="entry name" value="DNA_mismatch_repair_MutS/MSH"/>
</dbReference>
<dbReference type="InterPro" id="IPR000432">
    <property type="entry name" value="DNA_mismatch_repair_MutS_C"/>
</dbReference>
<dbReference type="InterPro" id="IPR007861">
    <property type="entry name" value="DNA_mismatch_repair_MutS_clamp"/>
</dbReference>
<dbReference type="InterPro" id="IPR007696">
    <property type="entry name" value="DNA_mismatch_repair_MutS_core"/>
</dbReference>
<dbReference type="InterPro" id="IPR016151">
    <property type="entry name" value="DNA_mismatch_repair_MutS_N"/>
</dbReference>
<dbReference type="InterPro" id="IPR036187">
    <property type="entry name" value="DNA_mismatch_repair_MutS_sf"/>
</dbReference>
<dbReference type="InterPro" id="IPR007860">
    <property type="entry name" value="DNA_mmatch_repair_MutS_con_dom"/>
</dbReference>
<dbReference type="InterPro" id="IPR045076">
    <property type="entry name" value="MutS"/>
</dbReference>
<dbReference type="InterPro" id="IPR036678">
    <property type="entry name" value="MutS_con_dom_sf"/>
</dbReference>
<dbReference type="InterPro" id="IPR027417">
    <property type="entry name" value="P-loop_NTPase"/>
</dbReference>
<dbReference type="NCBIfam" id="NF003810">
    <property type="entry name" value="PRK05399.1"/>
    <property type="match status" value="1"/>
</dbReference>
<dbReference type="PANTHER" id="PTHR11361:SF34">
    <property type="entry name" value="DNA MISMATCH REPAIR PROTEIN MSH1, MITOCHONDRIAL"/>
    <property type="match status" value="1"/>
</dbReference>
<dbReference type="PANTHER" id="PTHR11361">
    <property type="entry name" value="DNA MISMATCH REPAIR PROTEIN MUTS FAMILY MEMBER"/>
    <property type="match status" value="1"/>
</dbReference>
<dbReference type="Pfam" id="PF01624">
    <property type="entry name" value="MutS_I"/>
    <property type="match status" value="1"/>
</dbReference>
<dbReference type="Pfam" id="PF05188">
    <property type="entry name" value="MutS_II"/>
    <property type="match status" value="1"/>
</dbReference>
<dbReference type="Pfam" id="PF05192">
    <property type="entry name" value="MutS_III"/>
    <property type="match status" value="1"/>
</dbReference>
<dbReference type="Pfam" id="PF05190">
    <property type="entry name" value="MutS_IV"/>
    <property type="match status" value="1"/>
</dbReference>
<dbReference type="Pfam" id="PF00488">
    <property type="entry name" value="MutS_V"/>
    <property type="match status" value="1"/>
</dbReference>
<dbReference type="PIRSF" id="PIRSF037677">
    <property type="entry name" value="DNA_mis_repair_Msh6"/>
    <property type="match status" value="1"/>
</dbReference>
<dbReference type="SMART" id="SM00534">
    <property type="entry name" value="MUTSac"/>
    <property type="match status" value="1"/>
</dbReference>
<dbReference type="SMART" id="SM00533">
    <property type="entry name" value="MUTSd"/>
    <property type="match status" value="1"/>
</dbReference>
<dbReference type="SUPFAM" id="SSF55271">
    <property type="entry name" value="DNA repair protein MutS, domain I"/>
    <property type="match status" value="1"/>
</dbReference>
<dbReference type="SUPFAM" id="SSF53150">
    <property type="entry name" value="DNA repair protein MutS, domain II"/>
    <property type="match status" value="1"/>
</dbReference>
<dbReference type="SUPFAM" id="SSF48334">
    <property type="entry name" value="DNA repair protein MutS, domain III"/>
    <property type="match status" value="1"/>
</dbReference>
<dbReference type="SUPFAM" id="SSF52540">
    <property type="entry name" value="P-loop containing nucleoside triphosphate hydrolases"/>
    <property type="match status" value="1"/>
</dbReference>
<dbReference type="PROSITE" id="PS00486">
    <property type="entry name" value="DNA_MISMATCH_REPAIR_2"/>
    <property type="match status" value="1"/>
</dbReference>
<protein>
    <recommendedName>
        <fullName evidence="1">DNA mismatch repair protein MutS</fullName>
    </recommendedName>
</protein>
<proteinExistence type="inferred from homology"/>
<name>MUTS_WOLPM</name>
<evidence type="ECO:0000255" key="1">
    <source>
        <dbReference type="HAMAP-Rule" id="MF_00096"/>
    </source>
</evidence>
<evidence type="ECO:0000305" key="2"/>
<accession>P61673</accession>
<organism>
    <name type="scientific">Wolbachia pipientis wMel</name>
    <dbReference type="NCBI Taxonomy" id="163164"/>
    <lineage>
        <taxon>Bacteria</taxon>
        <taxon>Pseudomonadati</taxon>
        <taxon>Pseudomonadota</taxon>
        <taxon>Alphaproteobacteria</taxon>
        <taxon>Rickettsiales</taxon>
        <taxon>Anaplasmataceae</taxon>
        <taxon>Wolbachieae</taxon>
        <taxon>Wolbachia</taxon>
    </lineage>
</organism>
<feature type="chain" id="PRO_0000115168" description="DNA mismatch repair protein MutS">
    <location>
        <begin position="1"/>
        <end position="849"/>
    </location>
</feature>
<feature type="binding site" evidence="1">
    <location>
        <begin position="665"/>
        <end position="672"/>
    </location>
    <ligand>
        <name>ATP</name>
        <dbReference type="ChEBI" id="CHEBI:30616"/>
    </ligand>
</feature>
<sequence>MCNIIYNNVYQYNILKNIMSFVKEKNTPVMEQYLNLKAQYKDHLLFYRLGDFYELFFDDAIKAAKLLNIVLTKRGNSCGQEIPMCGVPAHSSESYLHKLIDLGFKVAICDQLETADEAKKRGYKSIVKRDVVRVVTPGTIIEDSLLEDKSNNYLASIVEQNDEYAISWLELSTGKFFHTLTSLKALDSDLLRISPRELLISEKFTEDEKIRSILKNYKISITQHAQSFFEYSKSHRTLCEFYKIRELGSIGNFSKVEIMACGALLEYVRVTQRGSIPRLEFPKTYKQQNFMLIDTSARRNLELFSTQFGEKKGSLISVIDHTVTASGGRLLKQMLASPLACSKAINLRLSTAQFFVNNHDSRRKIREILSNIPDIERSLSRLILGRGSPKDMNLLKIGLGKTLELSEFLCKIESGENGSLPQQYVIQTEIQPASRAGITVKSDESELSTIHKSLGNHKDLFELLNSAILDNNLSSVKEGGFIHSKYNSELSELSYILNNSNKLVTKLRESYRDLTGIAALKILHNNILGYYVEVSANHKITSDIFIHRQSLANSMRYTTNELKELENKILTARDAAIGLEMKIFSELCSEVAKESEKIALAANALAKLDIRTAFAELAVQNNYVKPIIDDSKEFNICSGRHPVVEVNDKFIANSINLAGIHLITGPNMAGKSTFLRQNALIAILAHMGSFVPAESAHIGVIDKIFSRVGATDNITAGYSTFMVEMIETATIVNQATDRSLVILDEIGRGTGVYDGLSIAQAVIEHIHNVNKCRAIFATHYHELTKVSKYLKNVKCFCVKIREWNGEVIFLHEVIEGIADESYGIHVAKLAGFPDSVLNRASEVFEELKA</sequence>
<gene>
    <name evidence="1" type="primary">mutS</name>
    <name type="ordered locus">WD_0190</name>
</gene>